<protein>
    <recommendedName>
        <fullName evidence="1">Phosphoribosylformylglycinamidine cyclo-ligase</fullName>
        <ecNumber evidence="1">6.3.3.1</ecNumber>
    </recommendedName>
    <alternativeName>
        <fullName evidence="1">AIR synthase</fullName>
    </alternativeName>
    <alternativeName>
        <fullName evidence="1">AIRS</fullName>
    </alternativeName>
    <alternativeName>
        <fullName evidence="1">Phosphoribosyl-aminoimidazole synthetase</fullName>
    </alternativeName>
</protein>
<feature type="chain" id="PRO_1000212825" description="Phosphoribosylformylglycinamidine cyclo-ligase">
    <location>
        <begin position="1"/>
        <end position="355"/>
    </location>
</feature>
<organism>
    <name type="scientific">Hamiltonella defensa subsp. Acyrthosiphon pisum (strain 5AT)</name>
    <dbReference type="NCBI Taxonomy" id="572265"/>
    <lineage>
        <taxon>Bacteria</taxon>
        <taxon>Pseudomonadati</taxon>
        <taxon>Pseudomonadota</taxon>
        <taxon>Gammaproteobacteria</taxon>
        <taxon>Enterobacterales</taxon>
        <taxon>Enterobacteriaceae</taxon>
        <taxon>aphid secondary symbionts</taxon>
        <taxon>Candidatus Hamiltonella</taxon>
    </lineage>
</organism>
<accession>C4K4D1</accession>
<gene>
    <name evidence="1" type="primary">purM</name>
    <name type="ordered locus">HDEF_0691</name>
</gene>
<comment type="catalytic activity">
    <reaction evidence="1">
        <text>2-formamido-N(1)-(5-O-phospho-beta-D-ribosyl)acetamidine + ATP = 5-amino-1-(5-phospho-beta-D-ribosyl)imidazole + ADP + phosphate + H(+)</text>
        <dbReference type="Rhea" id="RHEA:23032"/>
        <dbReference type="ChEBI" id="CHEBI:15378"/>
        <dbReference type="ChEBI" id="CHEBI:30616"/>
        <dbReference type="ChEBI" id="CHEBI:43474"/>
        <dbReference type="ChEBI" id="CHEBI:137981"/>
        <dbReference type="ChEBI" id="CHEBI:147287"/>
        <dbReference type="ChEBI" id="CHEBI:456216"/>
        <dbReference type="EC" id="6.3.3.1"/>
    </reaction>
</comment>
<comment type="pathway">
    <text evidence="1">Purine metabolism; IMP biosynthesis via de novo pathway; 5-amino-1-(5-phospho-D-ribosyl)imidazole from N(2)-formyl-N(1)-(5-phospho-D-ribosyl)glycinamide: step 2/2.</text>
</comment>
<comment type="subcellular location">
    <subcellularLocation>
        <location evidence="1">Cytoplasm</location>
    </subcellularLocation>
</comment>
<comment type="similarity">
    <text evidence="1">Belongs to the AIR synthase family.</text>
</comment>
<proteinExistence type="inferred from homology"/>
<dbReference type="EC" id="6.3.3.1" evidence="1"/>
<dbReference type="EMBL" id="CP001277">
    <property type="protein sequence ID" value="ACQ67424.1"/>
    <property type="molecule type" value="Genomic_DNA"/>
</dbReference>
<dbReference type="RefSeq" id="WP_015873245.1">
    <property type="nucleotide sequence ID" value="NC_012751.1"/>
</dbReference>
<dbReference type="SMR" id="C4K4D1"/>
<dbReference type="STRING" id="572265.HDEF_0691"/>
<dbReference type="GeneID" id="66260548"/>
<dbReference type="KEGG" id="hde:HDEF_0691"/>
<dbReference type="eggNOG" id="COG0150">
    <property type="taxonomic scope" value="Bacteria"/>
</dbReference>
<dbReference type="HOGENOM" id="CLU_047116_0_0_6"/>
<dbReference type="UniPathway" id="UPA00074">
    <property type="reaction ID" value="UER00129"/>
</dbReference>
<dbReference type="Proteomes" id="UP000002334">
    <property type="component" value="Chromosome"/>
</dbReference>
<dbReference type="GO" id="GO:0005829">
    <property type="term" value="C:cytosol"/>
    <property type="evidence" value="ECO:0007669"/>
    <property type="project" value="TreeGrafter"/>
</dbReference>
<dbReference type="GO" id="GO:0005524">
    <property type="term" value="F:ATP binding"/>
    <property type="evidence" value="ECO:0007669"/>
    <property type="project" value="UniProtKB-KW"/>
</dbReference>
<dbReference type="GO" id="GO:0004637">
    <property type="term" value="F:phosphoribosylamine-glycine ligase activity"/>
    <property type="evidence" value="ECO:0007669"/>
    <property type="project" value="TreeGrafter"/>
</dbReference>
<dbReference type="GO" id="GO:0004641">
    <property type="term" value="F:phosphoribosylformylglycinamidine cyclo-ligase activity"/>
    <property type="evidence" value="ECO:0007669"/>
    <property type="project" value="UniProtKB-UniRule"/>
</dbReference>
<dbReference type="GO" id="GO:0006189">
    <property type="term" value="P:'de novo' IMP biosynthetic process"/>
    <property type="evidence" value="ECO:0007669"/>
    <property type="project" value="UniProtKB-UniRule"/>
</dbReference>
<dbReference type="GO" id="GO:0046084">
    <property type="term" value="P:adenine biosynthetic process"/>
    <property type="evidence" value="ECO:0007669"/>
    <property type="project" value="TreeGrafter"/>
</dbReference>
<dbReference type="CDD" id="cd02196">
    <property type="entry name" value="PurM"/>
    <property type="match status" value="1"/>
</dbReference>
<dbReference type="FunFam" id="3.30.1330.10:FF:000001">
    <property type="entry name" value="Phosphoribosylformylglycinamidine cyclo-ligase"/>
    <property type="match status" value="1"/>
</dbReference>
<dbReference type="FunFam" id="3.90.650.10:FF:000001">
    <property type="entry name" value="Phosphoribosylformylglycinamidine cyclo-ligase"/>
    <property type="match status" value="1"/>
</dbReference>
<dbReference type="Gene3D" id="3.90.650.10">
    <property type="entry name" value="PurM-like C-terminal domain"/>
    <property type="match status" value="1"/>
</dbReference>
<dbReference type="Gene3D" id="3.30.1330.10">
    <property type="entry name" value="PurM-like, N-terminal domain"/>
    <property type="match status" value="1"/>
</dbReference>
<dbReference type="HAMAP" id="MF_00741">
    <property type="entry name" value="AIRS"/>
    <property type="match status" value="1"/>
</dbReference>
<dbReference type="InterPro" id="IPR010918">
    <property type="entry name" value="PurM-like_C_dom"/>
</dbReference>
<dbReference type="InterPro" id="IPR036676">
    <property type="entry name" value="PurM-like_C_sf"/>
</dbReference>
<dbReference type="InterPro" id="IPR016188">
    <property type="entry name" value="PurM-like_N"/>
</dbReference>
<dbReference type="InterPro" id="IPR036921">
    <property type="entry name" value="PurM-like_N_sf"/>
</dbReference>
<dbReference type="InterPro" id="IPR004733">
    <property type="entry name" value="PurM_cligase"/>
</dbReference>
<dbReference type="NCBIfam" id="TIGR00878">
    <property type="entry name" value="purM"/>
    <property type="match status" value="1"/>
</dbReference>
<dbReference type="PANTHER" id="PTHR10520:SF12">
    <property type="entry name" value="TRIFUNCTIONAL PURINE BIOSYNTHETIC PROTEIN ADENOSINE-3"/>
    <property type="match status" value="1"/>
</dbReference>
<dbReference type="PANTHER" id="PTHR10520">
    <property type="entry name" value="TRIFUNCTIONAL PURINE BIOSYNTHETIC PROTEIN ADENOSINE-3-RELATED"/>
    <property type="match status" value="1"/>
</dbReference>
<dbReference type="Pfam" id="PF00586">
    <property type="entry name" value="AIRS"/>
    <property type="match status" value="1"/>
</dbReference>
<dbReference type="Pfam" id="PF02769">
    <property type="entry name" value="AIRS_C"/>
    <property type="match status" value="1"/>
</dbReference>
<dbReference type="SUPFAM" id="SSF56042">
    <property type="entry name" value="PurM C-terminal domain-like"/>
    <property type="match status" value="1"/>
</dbReference>
<dbReference type="SUPFAM" id="SSF55326">
    <property type="entry name" value="PurM N-terminal domain-like"/>
    <property type="match status" value="1"/>
</dbReference>
<sequence length="355" mass="38808">MTDHVSLNYKDAGVDIHAGYLLVERIKKAVKQTHRPEVIGGLGGFGALCALPQKYREPILVSGTDGVGTKLRLAIDLKRHETIGIDLVAMCVNDLIVQGAEPLFFLDYFATGQLDVETAACVIAGIAEGCQQAGCALVGGETAEMPGMYQAKDYDLAGFCLGVVEKSKLINGHQNVKSGDTLLALASSGLHSNGYSLVRQVLNLSKKDPETWMLNGKSLADHLLEPTRIYVKSILTLIETQNVDIHAIAHLTGGGFFENIPRVLPKNTCVLIEESSWQWPCIFDWLQKTGNINKQEMYRTFNCGVGMIIALPENQADKTLDFLTSVGEKAWRIGRVDSSKTSSERIIFKKSILNN</sequence>
<keyword id="KW-0067">ATP-binding</keyword>
<keyword id="KW-0963">Cytoplasm</keyword>
<keyword id="KW-0436">Ligase</keyword>
<keyword id="KW-0547">Nucleotide-binding</keyword>
<keyword id="KW-0658">Purine biosynthesis</keyword>
<reference key="1">
    <citation type="journal article" date="2009" name="Proc. Natl. Acad. Sci. U.S.A.">
        <title>Hamiltonella defensa, genome evolution of protective bacterial endosymbiont from pathogenic ancestors.</title>
        <authorList>
            <person name="Degnan P.H."/>
            <person name="Yu Y."/>
            <person name="Sisneros N."/>
            <person name="Wing R.A."/>
            <person name="Moran N.A."/>
        </authorList>
    </citation>
    <scope>NUCLEOTIDE SEQUENCE [LARGE SCALE GENOMIC DNA]</scope>
    <source>
        <strain>5AT</strain>
    </source>
</reference>
<evidence type="ECO:0000255" key="1">
    <source>
        <dbReference type="HAMAP-Rule" id="MF_00741"/>
    </source>
</evidence>
<name>PUR5_HAMD5</name>